<sequence length="559" mass="59778">MPSIKSDIEIARAAAKKPIFEIGAKLGIPVEQLVPYGHDKAKVSAEFIAAQAGKKDGKLILVTAINPTPAGEGKTTTTVGLGDGLNRIGKKAVVCIREASLGPCFGVKGGAAGGGYAQVVPMEDINLHFTGDFHAITSAHNLLAAMIDNHIYWGNEENIDIRRITWRRVMDMNDRALRSMVLSLGGVANGFPRQGGFDITVASEVMAILCLATDLKDLERRLGDIIIGYRFDRTPVHARDLKADGAMAVLLKDAMQPNLVQTLENNPAFVHGGPFANIAHGCNSVTATKTALKLGDYVVTEAGFGADLGAEKFFDIKCRKAGLKPDAAVIVATVRALKMNGGVKKDDLGTEDVAALKKGCANLGRHVANVRRFGVPVVVAINHFVSDTDAEIAAVKEFVSRLGAEAILCRHWALGSAGIEDLAHKVVELAESGQAKFQPLYGDDLSLFEKIEIVASKIYHAGEVTADKAVRDQLQTWEEQGYGKLPICMAKTQYSFSTDPNLRGAPEGHIVTVREVRLSAGAGFVVAITGEIMTMPGLPKSPSAERIFLNDQGYIEGLF</sequence>
<feature type="chain" id="PRO_0000293053" description="Formate--tetrahydrofolate ligase">
    <location>
        <begin position="1"/>
        <end position="559"/>
    </location>
</feature>
<feature type="binding site" evidence="1">
    <location>
        <begin position="68"/>
        <end position="75"/>
    </location>
    <ligand>
        <name>ATP</name>
        <dbReference type="ChEBI" id="CHEBI:30616"/>
    </ligand>
</feature>
<protein>
    <recommendedName>
        <fullName evidence="1">Formate--tetrahydrofolate ligase</fullName>
        <ecNumber evidence="1">6.3.4.3</ecNumber>
    </recommendedName>
    <alternativeName>
        <fullName evidence="1">Formyltetrahydrofolate synthetase</fullName>
        <shortName evidence="1">FHS</shortName>
        <shortName evidence="1">FTHFS</shortName>
    </alternativeName>
</protein>
<accession>Q1MDG4</accession>
<comment type="catalytic activity">
    <reaction evidence="1">
        <text>(6S)-5,6,7,8-tetrahydrofolate + formate + ATP = (6R)-10-formyltetrahydrofolate + ADP + phosphate</text>
        <dbReference type="Rhea" id="RHEA:20221"/>
        <dbReference type="ChEBI" id="CHEBI:15740"/>
        <dbReference type="ChEBI" id="CHEBI:30616"/>
        <dbReference type="ChEBI" id="CHEBI:43474"/>
        <dbReference type="ChEBI" id="CHEBI:57453"/>
        <dbReference type="ChEBI" id="CHEBI:195366"/>
        <dbReference type="ChEBI" id="CHEBI:456216"/>
        <dbReference type="EC" id="6.3.4.3"/>
    </reaction>
</comment>
<comment type="pathway">
    <text evidence="1">One-carbon metabolism; tetrahydrofolate interconversion.</text>
</comment>
<comment type="similarity">
    <text evidence="1">Belongs to the formate--tetrahydrofolate ligase family.</text>
</comment>
<name>FTHS_RHIJ3</name>
<dbReference type="EC" id="6.3.4.3" evidence="1"/>
<dbReference type="EMBL" id="AM236080">
    <property type="protein sequence ID" value="CAK09013.1"/>
    <property type="molecule type" value="Genomic_DNA"/>
</dbReference>
<dbReference type="RefSeq" id="WP_011652998.1">
    <property type="nucleotide sequence ID" value="NC_008380.1"/>
</dbReference>
<dbReference type="SMR" id="Q1MDG4"/>
<dbReference type="EnsemblBacteria" id="CAK09013">
    <property type="protein sequence ID" value="CAK09013"/>
    <property type="gene ID" value="RL3525"/>
</dbReference>
<dbReference type="KEGG" id="rle:RL3525"/>
<dbReference type="eggNOG" id="COG2759">
    <property type="taxonomic scope" value="Bacteria"/>
</dbReference>
<dbReference type="HOGENOM" id="CLU_003601_3_3_5"/>
<dbReference type="UniPathway" id="UPA00193"/>
<dbReference type="Proteomes" id="UP000006575">
    <property type="component" value="Chromosome"/>
</dbReference>
<dbReference type="GO" id="GO:0005524">
    <property type="term" value="F:ATP binding"/>
    <property type="evidence" value="ECO:0007669"/>
    <property type="project" value="UniProtKB-UniRule"/>
</dbReference>
<dbReference type="GO" id="GO:0004329">
    <property type="term" value="F:formate-tetrahydrofolate ligase activity"/>
    <property type="evidence" value="ECO:0007669"/>
    <property type="project" value="UniProtKB-UniRule"/>
</dbReference>
<dbReference type="GO" id="GO:0035999">
    <property type="term" value="P:tetrahydrofolate interconversion"/>
    <property type="evidence" value="ECO:0007669"/>
    <property type="project" value="UniProtKB-UniRule"/>
</dbReference>
<dbReference type="CDD" id="cd00477">
    <property type="entry name" value="FTHFS"/>
    <property type="match status" value="1"/>
</dbReference>
<dbReference type="FunFam" id="3.30.1510.10:FF:000001">
    <property type="entry name" value="Formate--tetrahydrofolate ligase"/>
    <property type="match status" value="1"/>
</dbReference>
<dbReference type="FunFam" id="3.10.410.10:FF:000001">
    <property type="entry name" value="Putative formate--tetrahydrofolate ligase"/>
    <property type="match status" value="1"/>
</dbReference>
<dbReference type="Gene3D" id="3.30.1510.10">
    <property type="entry name" value="Domain 2, N(10)-formyltetrahydrofolate synthetase"/>
    <property type="match status" value="1"/>
</dbReference>
<dbReference type="Gene3D" id="3.10.410.10">
    <property type="entry name" value="Formyltetrahydrofolate synthetase, domain 3"/>
    <property type="match status" value="1"/>
</dbReference>
<dbReference type="Gene3D" id="3.40.50.300">
    <property type="entry name" value="P-loop containing nucleotide triphosphate hydrolases"/>
    <property type="match status" value="1"/>
</dbReference>
<dbReference type="HAMAP" id="MF_01543">
    <property type="entry name" value="FTHFS"/>
    <property type="match status" value="1"/>
</dbReference>
<dbReference type="InterPro" id="IPR000559">
    <property type="entry name" value="Formate_THF_ligase"/>
</dbReference>
<dbReference type="InterPro" id="IPR020628">
    <property type="entry name" value="Formate_THF_ligase_CS"/>
</dbReference>
<dbReference type="InterPro" id="IPR027417">
    <property type="entry name" value="P-loop_NTPase"/>
</dbReference>
<dbReference type="NCBIfam" id="NF010030">
    <property type="entry name" value="PRK13505.1"/>
    <property type="match status" value="1"/>
</dbReference>
<dbReference type="Pfam" id="PF01268">
    <property type="entry name" value="FTHFS"/>
    <property type="match status" value="1"/>
</dbReference>
<dbReference type="SUPFAM" id="SSF52540">
    <property type="entry name" value="P-loop containing nucleoside triphosphate hydrolases"/>
    <property type="match status" value="1"/>
</dbReference>
<dbReference type="PROSITE" id="PS00721">
    <property type="entry name" value="FTHFS_1"/>
    <property type="match status" value="1"/>
</dbReference>
<dbReference type="PROSITE" id="PS00722">
    <property type="entry name" value="FTHFS_2"/>
    <property type="match status" value="1"/>
</dbReference>
<gene>
    <name evidence="1" type="primary">fhs</name>
    <name type="ordered locus">RL3525</name>
</gene>
<reference key="1">
    <citation type="journal article" date="2006" name="Genome Biol.">
        <title>The genome of Rhizobium leguminosarum has recognizable core and accessory components.</title>
        <authorList>
            <person name="Young J.P.W."/>
            <person name="Crossman L.C."/>
            <person name="Johnston A.W.B."/>
            <person name="Thomson N.R."/>
            <person name="Ghazoui Z.F."/>
            <person name="Hull K.H."/>
            <person name="Wexler M."/>
            <person name="Curson A.R.J."/>
            <person name="Todd J.D."/>
            <person name="Poole P.S."/>
            <person name="Mauchline T.H."/>
            <person name="East A.K."/>
            <person name="Quail M.A."/>
            <person name="Churcher C."/>
            <person name="Arrowsmith C."/>
            <person name="Cherevach I."/>
            <person name="Chillingworth T."/>
            <person name="Clarke K."/>
            <person name="Cronin A."/>
            <person name="Davis P."/>
            <person name="Fraser A."/>
            <person name="Hance Z."/>
            <person name="Hauser H."/>
            <person name="Jagels K."/>
            <person name="Moule S."/>
            <person name="Mungall K."/>
            <person name="Norbertczak H."/>
            <person name="Rabbinowitsch E."/>
            <person name="Sanders M."/>
            <person name="Simmonds M."/>
            <person name="Whitehead S."/>
            <person name="Parkhill J."/>
        </authorList>
    </citation>
    <scope>NUCLEOTIDE SEQUENCE [LARGE SCALE GENOMIC DNA]</scope>
    <source>
        <strain>DSM 114642 / LMG 32736 / 3841</strain>
    </source>
</reference>
<evidence type="ECO:0000255" key="1">
    <source>
        <dbReference type="HAMAP-Rule" id="MF_01543"/>
    </source>
</evidence>
<organism>
    <name type="scientific">Rhizobium johnstonii (strain DSM 114642 / LMG 32736 / 3841)</name>
    <name type="common">Rhizobium leguminosarum bv. viciae</name>
    <dbReference type="NCBI Taxonomy" id="216596"/>
    <lineage>
        <taxon>Bacteria</taxon>
        <taxon>Pseudomonadati</taxon>
        <taxon>Pseudomonadota</taxon>
        <taxon>Alphaproteobacteria</taxon>
        <taxon>Hyphomicrobiales</taxon>
        <taxon>Rhizobiaceae</taxon>
        <taxon>Rhizobium/Agrobacterium group</taxon>
        <taxon>Rhizobium</taxon>
        <taxon>Rhizobium johnstonii</taxon>
    </lineage>
</organism>
<proteinExistence type="inferred from homology"/>
<keyword id="KW-0067">ATP-binding</keyword>
<keyword id="KW-0436">Ligase</keyword>
<keyword id="KW-0547">Nucleotide-binding</keyword>
<keyword id="KW-0554">One-carbon metabolism</keyword>